<name>CXB6_MOUSE</name>
<organism>
    <name type="scientific">Mus musculus</name>
    <name type="common">Mouse</name>
    <dbReference type="NCBI Taxonomy" id="10090"/>
    <lineage>
        <taxon>Eukaryota</taxon>
        <taxon>Metazoa</taxon>
        <taxon>Chordata</taxon>
        <taxon>Craniata</taxon>
        <taxon>Vertebrata</taxon>
        <taxon>Euteleostomi</taxon>
        <taxon>Mammalia</taxon>
        <taxon>Eutheria</taxon>
        <taxon>Euarchontoglires</taxon>
        <taxon>Glires</taxon>
        <taxon>Rodentia</taxon>
        <taxon>Myomorpha</taxon>
        <taxon>Muroidea</taxon>
        <taxon>Muridae</taxon>
        <taxon>Murinae</taxon>
        <taxon>Mus</taxon>
        <taxon>Mus</taxon>
    </lineage>
</organism>
<accession>P70689</accession>
<protein>
    <recommendedName>
        <fullName>Gap junction beta-6 protein</fullName>
    </recommendedName>
    <alternativeName>
        <fullName>Connexin-30</fullName>
        <shortName>Cx30</shortName>
    </alternativeName>
</protein>
<gene>
    <name type="primary">Gjb6</name>
    <name type="synonym">Cxn-30</name>
</gene>
<reference key="1">
    <citation type="journal article" date="1996" name="J. Biol. Chem.">
        <title>Molecular cloning and functional expression of mouse connexin-30, a gap junction gene highly expressed in adult brain and skin.</title>
        <authorList>
            <person name="Dahl E."/>
            <person name="Manthey D."/>
            <person name="Chen Y."/>
            <person name="Schwarz H.-J."/>
            <person name="Chang Y.S."/>
            <person name="Lalley P.A."/>
            <person name="Nicholson B.J."/>
            <person name="Willecke K."/>
        </authorList>
    </citation>
    <scope>NUCLEOTIDE SEQUENCE [GENOMIC DNA]</scope>
    <source>
        <strain>C57BL/6J</strain>
    </source>
</reference>
<reference key="2">
    <citation type="journal article" date="2004" name="Genome Res.">
        <title>The status, quality, and expansion of the NIH full-length cDNA project: the Mammalian Gene Collection (MGC).</title>
        <authorList>
            <consortium name="The MGC Project Team"/>
        </authorList>
    </citation>
    <scope>NUCLEOTIDE SEQUENCE [LARGE SCALE MRNA]</scope>
    <source>
        <strain>C57BL/6J</strain>
        <tissue>Bone</tissue>
        <tissue>Mammary gland</tissue>
    </source>
</reference>
<reference key="3">
    <citation type="journal article" date="2010" name="Hum. Mol. Genet.">
        <title>Consortin, a trans-Golgi network cargo receptor for the plasma membrane targeting and recycling of connexins.</title>
        <authorList>
            <person name="del Castillo F.J."/>
            <person name="Cohen-Salmon M."/>
            <person name="Charollais A."/>
            <person name="Caille D."/>
            <person name="Lampe P.D."/>
            <person name="Chavrier P."/>
            <person name="Meda P."/>
            <person name="Petit C."/>
        </authorList>
    </citation>
    <scope>INTERACTION WITH CNST</scope>
</reference>
<dbReference type="EMBL" id="Z70023">
    <property type="protein sequence ID" value="CAA93845.1"/>
    <property type="molecule type" value="Genomic_DNA"/>
</dbReference>
<dbReference type="EMBL" id="BC013811">
    <property type="protein sequence ID" value="AAH13811.1"/>
    <property type="molecule type" value="mRNA"/>
</dbReference>
<dbReference type="EMBL" id="BC016507">
    <property type="protein sequence ID" value="AAH16507.1"/>
    <property type="molecule type" value="mRNA"/>
</dbReference>
<dbReference type="EMBL" id="BC063762">
    <property type="protein sequence ID" value="AAH63762.1"/>
    <property type="molecule type" value="mRNA"/>
</dbReference>
<dbReference type="CCDS" id="CCDS27154.1"/>
<dbReference type="RefSeq" id="NP_001010937.1">
    <property type="nucleotide sequence ID" value="NM_001010937.3"/>
</dbReference>
<dbReference type="RefSeq" id="NP_001258592.1">
    <property type="nucleotide sequence ID" value="NM_001271663.2"/>
</dbReference>
<dbReference type="RefSeq" id="NP_001411377.1">
    <property type="nucleotide sequence ID" value="NM_001424448.1"/>
</dbReference>
<dbReference type="RefSeq" id="NP_001411378.1">
    <property type="nucleotide sequence ID" value="NM_001424449.1"/>
</dbReference>
<dbReference type="RefSeq" id="NP_001411379.1">
    <property type="nucleotide sequence ID" value="NM_001424450.1"/>
</dbReference>
<dbReference type="RefSeq" id="XP_006518623.1">
    <property type="nucleotide sequence ID" value="XM_006518560.2"/>
</dbReference>
<dbReference type="RefSeq" id="XP_006518624.1">
    <property type="nucleotide sequence ID" value="XM_006518561.3"/>
</dbReference>
<dbReference type="SMR" id="P70689"/>
<dbReference type="BioGRID" id="199936">
    <property type="interactions" value="4"/>
</dbReference>
<dbReference type="FunCoup" id="P70689">
    <property type="interactions" value="25"/>
</dbReference>
<dbReference type="IntAct" id="P70689">
    <property type="interactions" value="2"/>
</dbReference>
<dbReference type="MINT" id="P70689"/>
<dbReference type="STRING" id="10090.ENSMUSP00000035630"/>
<dbReference type="GlyGen" id="P70689">
    <property type="glycosylation" value="3 sites, 1 O-linked glycan (3 sites)"/>
</dbReference>
<dbReference type="iPTMnet" id="P70689"/>
<dbReference type="PhosphoSitePlus" id="P70689"/>
<dbReference type="PaxDb" id="10090-ENSMUSP00000035630"/>
<dbReference type="ProteomicsDB" id="279219"/>
<dbReference type="Antibodypedia" id="6442">
    <property type="antibodies" value="230 antibodies from 29 providers"/>
</dbReference>
<dbReference type="DNASU" id="14623"/>
<dbReference type="Ensembl" id="ENSMUST00000039380.9">
    <property type="protein sequence ID" value="ENSMUSP00000035630.9"/>
    <property type="gene ID" value="ENSMUSG00000040055.10"/>
</dbReference>
<dbReference type="GeneID" id="14623"/>
<dbReference type="KEGG" id="mmu:14623"/>
<dbReference type="UCSC" id="uc007ucy.2">
    <property type="organism name" value="mouse"/>
</dbReference>
<dbReference type="AGR" id="MGI:107588"/>
<dbReference type="CTD" id="10804"/>
<dbReference type="MGI" id="MGI:107588">
    <property type="gene designation" value="Gjb6"/>
</dbReference>
<dbReference type="VEuPathDB" id="HostDB:ENSMUSG00000040055"/>
<dbReference type="eggNOG" id="ENOG502QWM8">
    <property type="taxonomic scope" value="Eukaryota"/>
</dbReference>
<dbReference type="GeneTree" id="ENSGT01030000234513"/>
<dbReference type="HOGENOM" id="CLU_037388_4_1_1"/>
<dbReference type="InParanoid" id="P70689"/>
<dbReference type="OMA" id="PNHAIKE"/>
<dbReference type="OrthoDB" id="8934037at2759"/>
<dbReference type="PhylomeDB" id="P70689"/>
<dbReference type="TreeFam" id="TF329606"/>
<dbReference type="Reactome" id="R-MMU-190861">
    <property type="pathway name" value="Gap junction assembly"/>
</dbReference>
<dbReference type="BioGRID-ORCS" id="14623">
    <property type="hits" value="0 hits in 78 CRISPR screens"/>
</dbReference>
<dbReference type="PRO" id="PR:P70689"/>
<dbReference type="Proteomes" id="UP000000589">
    <property type="component" value="Chromosome 14"/>
</dbReference>
<dbReference type="RNAct" id="P70689">
    <property type="molecule type" value="protein"/>
</dbReference>
<dbReference type="Bgee" id="ENSMUSG00000040055">
    <property type="expression patterns" value="Expressed in utricle of membranous labyrinth and 139 other cell types or tissues"/>
</dbReference>
<dbReference type="ExpressionAtlas" id="P70689">
    <property type="expression patterns" value="baseline and differential"/>
</dbReference>
<dbReference type="GO" id="GO:0005884">
    <property type="term" value="C:actin filament"/>
    <property type="evidence" value="ECO:0007669"/>
    <property type="project" value="Ensembl"/>
</dbReference>
<dbReference type="GO" id="GO:0016324">
    <property type="term" value="C:apical plasma membrane"/>
    <property type="evidence" value="ECO:0007669"/>
    <property type="project" value="Ensembl"/>
</dbReference>
<dbReference type="GO" id="GO:0005922">
    <property type="term" value="C:connexin complex"/>
    <property type="evidence" value="ECO:0007669"/>
    <property type="project" value="InterPro"/>
</dbReference>
<dbReference type="GO" id="GO:0005921">
    <property type="term" value="C:gap junction"/>
    <property type="evidence" value="ECO:0000314"/>
    <property type="project" value="MGI"/>
</dbReference>
<dbReference type="GO" id="GO:0051015">
    <property type="term" value="F:actin filament binding"/>
    <property type="evidence" value="ECO:0007669"/>
    <property type="project" value="Ensembl"/>
</dbReference>
<dbReference type="GO" id="GO:0048487">
    <property type="term" value="F:beta-tubulin binding"/>
    <property type="evidence" value="ECO:0007669"/>
    <property type="project" value="Ensembl"/>
</dbReference>
<dbReference type="GO" id="GO:1903763">
    <property type="term" value="F:gap junction channel activity involved in cell communication by electrical coupling"/>
    <property type="evidence" value="ECO:0007669"/>
    <property type="project" value="Ensembl"/>
</dbReference>
<dbReference type="GO" id="GO:0008017">
    <property type="term" value="F:microtubule binding"/>
    <property type="evidence" value="ECO:0007669"/>
    <property type="project" value="Ensembl"/>
</dbReference>
<dbReference type="GO" id="GO:0071333">
    <property type="term" value="P:cellular response to glucose stimulus"/>
    <property type="evidence" value="ECO:0007669"/>
    <property type="project" value="Ensembl"/>
</dbReference>
<dbReference type="GO" id="GO:0042471">
    <property type="term" value="P:ear morphogenesis"/>
    <property type="evidence" value="ECO:0000315"/>
    <property type="project" value="MGI"/>
</dbReference>
<dbReference type="GO" id="GO:0016264">
    <property type="term" value="P:gap junction assembly"/>
    <property type="evidence" value="ECO:0007669"/>
    <property type="project" value="Ensembl"/>
</dbReference>
<dbReference type="GO" id="GO:1990349">
    <property type="term" value="P:gap junction-mediated intercellular transport"/>
    <property type="evidence" value="ECO:0007669"/>
    <property type="project" value="Ensembl"/>
</dbReference>
<dbReference type="GO" id="GO:0048839">
    <property type="term" value="P:inner ear development"/>
    <property type="evidence" value="ECO:0007669"/>
    <property type="project" value="Ensembl"/>
</dbReference>
<dbReference type="GO" id="GO:0008285">
    <property type="term" value="P:negative regulation of cell population proliferation"/>
    <property type="evidence" value="ECO:0007669"/>
    <property type="project" value="Ensembl"/>
</dbReference>
<dbReference type="GO" id="GO:0051602">
    <property type="term" value="P:response to electrical stimulus"/>
    <property type="evidence" value="ECO:0007669"/>
    <property type="project" value="Ensembl"/>
</dbReference>
<dbReference type="GO" id="GO:0032496">
    <property type="term" value="P:response to lipopolysaccharide"/>
    <property type="evidence" value="ECO:0007669"/>
    <property type="project" value="Ensembl"/>
</dbReference>
<dbReference type="GO" id="GO:0007605">
    <property type="term" value="P:sensory perception of sound"/>
    <property type="evidence" value="ECO:0000315"/>
    <property type="project" value="MGI"/>
</dbReference>
<dbReference type="FunFam" id="1.20.1440.80:FF:000001">
    <property type="entry name" value="Gap junction alpha-1"/>
    <property type="match status" value="1"/>
</dbReference>
<dbReference type="Gene3D" id="1.20.1440.80">
    <property type="entry name" value="Gap junction channel protein cysteine-rich domain"/>
    <property type="match status" value="1"/>
</dbReference>
<dbReference type="InterPro" id="IPR000500">
    <property type="entry name" value="Connexin"/>
</dbReference>
<dbReference type="InterPro" id="IPR019570">
    <property type="entry name" value="Connexin_CCC"/>
</dbReference>
<dbReference type="InterPro" id="IPR017990">
    <property type="entry name" value="Connexin_CS"/>
</dbReference>
<dbReference type="InterPro" id="IPR013092">
    <property type="entry name" value="Connexin_N"/>
</dbReference>
<dbReference type="InterPro" id="IPR038359">
    <property type="entry name" value="Connexin_N_sf"/>
</dbReference>
<dbReference type="PANTHER" id="PTHR11984">
    <property type="entry name" value="CONNEXIN"/>
    <property type="match status" value="1"/>
</dbReference>
<dbReference type="PANTHER" id="PTHR11984:SF23">
    <property type="entry name" value="GAP JUNCTION BETA-6 PROTEIN"/>
    <property type="match status" value="1"/>
</dbReference>
<dbReference type="Pfam" id="PF00029">
    <property type="entry name" value="Connexin"/>
    <property type="match status" value="1"/>
</dbReference>
<dbReference type="PRINTS" id="PR00206">
    <property type="entry name" value="CONNEXIN"/>
</dbReference>
<dbReference type="SMART" id="SM00037">
    <property type="entry name" value="CNX"/>
    <property type="match status" value="1"/>
</dbReference>
<dbReference type="SMART" id="SM01089">
    <property type="entry name" value="Connexin_CCC"/>
    <property type="match status" value="1"/>
</dbReference>
<dbReference type="PROSITE" id="PS00407">
    <property type="entry name" value="CONNEXINS_1"/>
    <property type="match status" value="1"/>
</dbReference>
<dbReference type="PROSITE" id="PS00408">
    <property type="entry name" value="CONNEXINS_2"/>
    <property type="match status" value="1"/>
</dbReference>
<proteinExistence type="evidence at protein level"/>
<evidence type="ECO:0000255" key="1"/>
<evidence type="ECO:0000269" key="2">
    <source>
    </source>
</evidence>
<evidence type="ECO:0000305" key="3"/>
<sequence>MDWGTLHTVIGGVNKHSTSIGKVWITVIFIFRVMILVVAAQEVWGDEQEDFVCNTLQPGCKNVCYDHFFPVSHIRLWALQLIFVSTPALLVAMHVAYYRHETARKFIRGEKRNEFKDLEDIKRQKVRIEGSLWWTYTSSIFFRIIFEAAFMYVFYFLYNGYHLPWVLKCGIDPCPNLVDCFISRPTEKTVFTVFMISASVICMLLNVAELCYLLLKLCFRRSKRTQAQRNHPNHALKESKQNEMNELISDSGQNAITSFPS</sequence>
<comment type="function">
    <text>One gap junction consists of a cluster of closely packed pairs of transmembrane channels, the connexons, through which materials of low MW diffuse from one cell to a neighboring cell.</text>
</comment>
<comment type="subunit">
    <text evidence="2">A connexon is composed of a hexamer of connexins. Interacts with CNST.</text>
</comment>
<comment type="interaction">
    <interactant intactId="EBI-2615416">
        <id>P70689</id>
    </interactant>
    <interactant intactId="EBI-79508">
        <id>P39447</id>
        <label>Tjp1</label>
    </interactant>
    <organismsDiffer>false</organismsDiffer>
    <experiments>3</experiments>
</comment>
<comment type="subcellular location">
    <subcellularLocation>
        <location>Cell membrane</location>
        <topology>Multi-pass membrane protein</topology>
    </subcellularLocation>
    <subcellularLocation>
        <location>Cell junction</location>
        <location>Gap junction</location>
    </subcellularLocation>
</comment>
<comment type="tissue specificity">
    <text>Highly expressed in adult brain and skin. Less in uterus, lung and eye. Very low in testis and sciatic nerve. No expression before birth.</text>
</comment>
<comment type="similarity">
    <text evidence="3">Belongs to the connexin family. Beta-type (group I) subfamily.</text>
</comment>
<feature type="chain" id="PRO_0000057872" description="Gap junction beta-6 protein">
    <location>
        <begin position="1"/>
        <end position="261"/>
    </location>
</feature>
<feature type="topological domain" description="Cytoplasmic" evidence="1">
    <location>
        <begin position="1"/>
        <end position="22"/>
    </location>
</feature>
<feature type="transmembrane region" description="Helical" evidence="1">
    <location>
        <begin position="23"/>
        <end position="45"/>
    </location>
</feature>
<feature type="topological domain" description="Extracellular" evidence="1">
    <location>
        <begin position="46"/>
        <end position="75"/>
    </location>
</feature>
<feature type="transmembrane region" description="Helical" evidence="1">
    <location>
        <begin position="76"/>
        <end position="98"/>
    </location>
</feature>
<feature type="topological domain" description="Cytoplasmic" evidence="1">
    <location>
        <begin position="99"/>
        <end position="131"/>
    </location>
</feature>
<feature type="transmembrane region" description="Helical" evidence="1">
    <location>
        <begin position="132"/>
        <end position="154"/>
    </location>
</feature>
<feature type="topological domain" description="Extracellular" evidence="1">
    <location>
        <begin position="155"/>
        <end position="192"/>
    </location>
</feature>
<feature type="transmembrane region" description="Helical" evidence="1">
    <location>
        <begin position="193"/>
        <end position="215"/>
    </location>
</feature>
<feature type="topological domain" description="Cytoplasmic" evidence="1">
    <location>
        <begin position="216"/>
        <end position="261"/>
    </location>
</feature>
<keyword id="KW-0965">Cell junction</keyword>
<keyword id="KW-1003">Cell membrane</keyword>
<keyword id="KW-0303">Gap junction</keyword>
<keyword id="KW-1009">Hearing</keyword>
<keyword id="KW-0472">Membrane</keyword>
<keyword id="KW-1185">Reference proteome</keyword>
<keyword id="KW-0812">Transmembrane</keyword>
<keyword id="KW-1133">Transmembrane helix</keyword>